<protein>
    <recommendedName>
        <fullName evidence="1">Small ribosomal subunit protein uS14</fullName>
    </recommendedName>
    <alternativeName>
        <fullName evidence="2">30S ribosomal protein S14 type Z</fullName>
    </alternativeName>
</protein>
<feature type="chain" id="PRO_1000166770" description="Small ribosomal subunit protein uS14">
    <location>
        <begin position="1"/>
        <end position="61"/>
    </location>
</feature>
<feature type="binding site" evidence="1">
    <location>
        <position position="24"/>
    </location>
    <ligand>
        <name>Zn(2+)</name>
        <dbReference type="ChEBI" id="CHEBI:29105"/>
    </ligand>
</feature>
<feature type="binding site" evidence="1">
    <location>
        <position position="27"/>
    </location>
    <ligand>
        <name>Zn(2+)</name>
        <dbReference type="ChEBI" id="CHEBI:29105"/>
    </ligand>
</feature>
<feature type="binding site" evidence="1">
    <location>
        <position position="40"/>
    </location>
    <ligand>
        <name>Zn(2+)</name>
        <dbReference type="ChEBI" id="CHEBI:29105"/>
    </ligand>
</feature>
<feature type="binding site" evidence="1">
    <location>
        <position position="43"/>
    </location>
    <ligand>
        <name>Zn(2+)</name>
        <dbReference type="ChEBI" id="CHEBI:29105"/>
    </ligand>
</feature>
<name>RS14Z_HALOH</name>
<evidence type="ECO:0000255" key="1">
    <source>
        <dbReference type="HAMAP-Rule" id="MF_01364"/>
    </source>
</evidence>
<evidence type="ECO:0000305" key="2"/>
<sequence length="61" mass="7248">MTRKALMEKAKKEPKYSTRKVNRCKRCGRARGYMRKFDLCRICFRELAHKGEIPGVKKASW</sequence>
<reference key="1">
    <citation type="journal article" date="2009" name="PLoS ONE">
        <title>Genome analysis of the anaerobic thermohalophilic bacterium Halothermothrix orenii.</title>
        <authorList>
            <person name="Mavromatis K."/>
            <person name="Ivanova N."/>
            <person name="Anderson I."/>
            <person name="Lykidis A."/>
            <person name="Hooper S.D."/>
            <person name="Sun H."/>
            <person name="Kunin V."/>
            <person name="Lapidus A."/>
            <person name="Hugenholtz P."/>
            <person name="Patel B."/>
            <person name="Kyrpides N.C."/>
        </authorList>
    </citation>
    <scope>NUCLEOTIDE SEQUENCE [LARGE SCALE GENOMIC DNA]</scope>
    <source>
        <strain>H 168 / OCM 544 / DSM 9562</strain>
    </source>
</reference>
<accession>B8D0D7</accession>
<dbReference type="EMBL" id="CP001098">
    <property type="protein sequence ID" value="ACL68891.1"/>
    <property type="molecule type" value="Genomic_DNA"/>
</dbReference>
<dbReference type="RefSeq" id="WP_012635089.1">
    <property type="nucleotide sequence ID" value="NC_011899.1"/>
</dbReference>
<dbReference type="SMR" id="B8D0D7"/>
<dbReference type="STRING" id="373903.Hore_01300"/>
<dbReference type="KEGG" id="hor:Hore_01300"/>
<dbReference type="eggNOG" id="COG0199">
    <property type="taxonomic scope" value="Bacteria"/>
</dbReference>
<dbReference type="HOGENOM" id="CLU_139869_3_0_9"/>
<dbReference type="OrthoDB" id="9810484at2"/>
<dbReference type="Proteomes" id="UP000000719">
    <property type="component" value="Chromosome"/>
</dbReference>
<dbReference type="GO" id="GO:0005737">
    <property type="term" value="C:cytoplasm"/>
    <property type="evidence" value="ECO:0007669"/>
    <property type="project" value="UniProtKB-ARBA"/>
</dbReference>
<dbReference type="GO" id="GO:0015935">
    <property type="term" value="C:small ribosomal subunit"/>
    <property type="evidence" value="ECO:0007669"/>
    <property type="project" value="TreeGrafter"/>
</dbReference>
<dbReference type="GO" id="GO:0019843">
    <property type="term" value="F:rRNA binding"/>
    <property type="evidence" value="ECO:0007669"/>
    <property type="project" value="UniProtKB-UniRule"/>
</dbReference>
<dbReference type="GO" id="GO:0003735">
    <property type="term" value="F:structural constituent of ribosome"/>
    <property type="evidence" value="ECO:0007669"/>
    <property type="project" value="InterPro"/>
</dbReference>
<dbReference type="GO" id="GO:0008270">
    <property type="term" value="F:zinc ion binding"/>
    <property type="evidence" value="ECO:0007669"/>
    <property type="project" value="UniProtKB-UniRule"/>
</dbReference>
<dbReference type="GO" id="GO:0006412">
    <property type="term" value="P:translation"/>
    <property type="evidence" value="ECO:0007669"/>
    <property type="project" value="UniProtKB-UniRule"/>
</dbReference>
<dbReference type="FunFam" id="4.10.830.10:FF:000001">
    <property type="entry name" value="30S ribosomal protein S14 type Z"/>
    <property type="match status" value="1"/>
</dbReference>
<dbReference type="Gene3D" id="4.10.830.10">
    <property type="entry name" value="30s Ribosomal Protein S14, Chain N"/>
    <property type="match status" value="1"/>
</dbReference>
<dbReference type="HAMAP" id="MF_01364_B">
    <property type="entry name" value="Ribosomal_uS14_2_B"/>
    <property type="match status" value="1"/>
</dbReference>
<dbReference type="InterPro" id="IPR001209">
    <property type="entry name" value="Ribosomal_uS14"/>
</dbReference>
<dbReference type="InterPro" id="IPR023053">
    <property type="entry name" value="Ribosomal_uS14_bact"/>
</dbReference>
<dbReference type="InterPro" id="IPR018271">
    <property type="entry name" value="Ribosomal_uS14_CS"/>
</dbReference>
<dbReference type="InterPro" id="IPR043140">
    <property type="entry name" value="Ribosomal_uS14_sf"/>
</dbReference>
<dbReference type="NCBIfam" id="NF005974">
    <property type="entry name" value="PRK08061.1"/>
    <property type="match status" value="1"/>
</dbReference>
<dbReference type="PANTHER" id="PTHR19836">
    <property type="entry name" value="30S RIBOSOMAL PROTEIN S14"/>
    <property type="match status" value="1"/>
</dbReference>
<dbReference type="PANTHER" id="PTHR19836:SF19">
    <property type="entry name" value="SMALL RIBOSOMAL SUBUNIT PROTEIN US14M"/>
    <property type="match status" value="1"/>
</dbReference>
<dbReference type="Pfam" id="PF00253">
    <property type="entry name" value="Ribosomal_S14"/>
    <property type="match status" value="1"/>
</dbReference>
<dbReference type="SUPFAM" id="SSF57716">
    <property type="entry name" value="Glucocorticoid receptor-like (DNA-binding domain)"/>
    <property type="match status" value="1"/>
</dbReference>
<dbReference type="PROSITE" id="PS00527">
    <property type="entry name" value="RIBOSOMAL_S14"/>
    <property type="match status" value="1"/>
</dbReference>
<proteinExistence type="inferred from homology"/>
<comment type="function">
    <text evidence="1">Binds 16S rRNA, required for the assembly of 30S particles and may also be responsible for determining the conformation of the 16S rRNA at the A site.</text>
</comment>
<comment type="cofactor">
    <cofactor evidence="1">
        <name>Zn(2+)</name>
        <dbReference type="ChEBI" id="CHEBI:29105"/>
    </cofactor>
    <text evidence="1">Binds 1 zinc ion per subunit.</text>
</comment>
<comment type="subunit">
    <text evidence="1">Part of the 30S ribosomal subunit. Contacts proteins S3 and S10.</text>
</comment>
<comment type="similarity">
    <text evidence="1">Belongs to the universal ribosomal protein uS14 family. Zinc-binding uS14 subfamily.</text>
</comment>
<gene>
    <name evidence="1" type="primary">rpsZ</name>
    <name evidence="1" type="synonym">rpsN</name>
    <name type="ordered locus">Hore_01300</name>
</gene>
<organism>
    <name type="scientific">Halothermothrix orenii (strain H 168 / OCM 544 / DSM 9562)</name>
    <dbReference type="NCBI Taxonomy" id="373903"/>
    <lineage>
        <taxon>Bacteria</taxon>
        <taxon>Bacillati</taxon>
        <taxon>Bacillota</taxon>
        <taxon>Clostridia</taxon>
        <taxon>Halanaerobiales</taxon>
        <taxon>Halothermotrichaceae</taxon>
        <taxon>Halothermothrix</taxon>
    </lineage>
</organism>
<keyword id="KW-0479">Metal-binding</keyword>
<keyword id="KW-1185">Reference proteome</keyword>
<keyword id="KW-0687">Ribonucleoprotein</keyword>
<keyword id="KW-0689">Ribosomal protein</keyword>
<keyword id="KW-0694">RNA-binding</keyword>
<keyword id="KW-0699">rRNA-binding</keyword>
<keyword id="KW-0862">Zinc</keyword>